<gene>
    <name type="primary">mb</name>
</gene>
<name>MYG_HETPO</name>
<sequence>MTEWEHVNKVWAVVEPDIPAVGLAILLRLFKEHKETKDLFPKFKEIPVQQLGNNEDLRKHGVTVLRALGNILKQKGKHSTNVKELADTHINKHKIPPKNFVLITNIAVKVLTEMYPSDMTGPMQESFSKVFTVICSDLETLYKEANFQG</sequence>
<comment type="function">
    <text evidence="1">Monomeric heme protein which primary function is to store oxygen and facilitate its diffusion within muscle tissues. Reversibly binds oxygen through a pentacoordinated heme iron and enables its timely and efficient release as needed during periods of heightened demand. Depending on the oxidative conditions of tissues and cells, and in addition to its ability to bind oxygen, it also has a nitrite reductase activity whereby it regulates the production of bioactive nitric oxide. Under stress conditions, like hypoxia and anoxia, it also protects cells against reactive oxygen species thanks to its pseudoperoxidase activity.</text>
</comment>
<comment type="catalytic activity">
    <reaction evidence="1">
        <text>Fe(III)-heme b-[protein] + nitric oxide + H2O = Fe(II)-heme b-[protein] + nitrite + 2 H(+)</text>
        <dbReference type="Rhea" id="RHEA:77711"/>
        <dbReference type="Rhea" id="RHEA-COMP:18975"/>
        <dbReference type="Rhea" id="RHEA-COMP:18976"/>
        <dbReference type="ChEBI" id="CHEBI:15377"/>
        <dbReference type="ChEBI" id="CHEBI:15378"/>
        <dbReference type="ChEBI" id="CHEBI:16301"/>
        <dbReference type="ChEBI" id="CHEBI:16480"/>
        <dbReference type="ChEBI" id="CHEBI:55376"/>
        <dbReference type="ChEBI" id="CHEBI:60344"/>
    </reaction>
    <physiologicalReaction direction="right-to-left" evidence="1">
        <dbReference type="Rhea" id="RHEA:77713"/>
    </physiologicalReaction>
</comment>
<comment type="catalytic activity">
    <reaction evidence="1">
        <text>H2O2 + AH2 = A + 2 H2O</text>
        <dbReference type="Rhea" id="RHEA:30275"/>
        <dbReference type="ChEBI" id="CHEBI:13193"/>
        <dbReference type="ChEBI" id="CHEBI:15377"/>
        <dbReference type="ChEBI" id="CHEBI:16240"/>
        <dbReference type="ChEBI" id="CHEBI:17499"/>
    </reaction>
</comment>
<comment type="subunit">
    <text evidence="2">Monomeric.</text>
</comment>
<comment type="subcellular location">
    <subcellularLocation>
        <location evidence="1">Cytoplasm</location>
        <location evidence="1">Sarcoplasm</location>
    </subcellularLocation>
</comment>
<comment type="similarity">
    <text evidence="5">Belongs to the globin family.</text>
</comment>
<proteinExistence type="evidence at protein level"/>
<evidence type="ECO:0000250" key="1">
    <source>
        <dbReference type="UniProtKB" id="P02144"/>
    </source>
</evidence>
<evidence type="ECO:0000250" key="2">
    <source>
        <dbReference type="UniProtKB" id="P02185"/>
    </source>
</evidence>
<evidence type="ECO:0000250" key="3">
    <source>
        <dbReference type="UniProtKB" id="P02189"/>
    </source>
</evidence>
<evidence type="ECO:0000250" key="4">
    <source>
        <dbReference type="UniProtKB" id="P68082"/>
    </source>
</evidence>
<evidence type="ECO:0000255" key="5">
    <source>
        <dbReference type="PROSITE-ProRule" id="PRU00238"/>
    </source>
</evidence>
<evidence type="ECO:0000269" key="6">
    <source>
    </source>
</evidence>
<accession>P02206</accession>
<reference key="1">
    <citation type="journal article" date="1979" name="Aust. J. Biol. Sci.">
        <title>Myoglobin of the shark Heterodontus portusjacksoni: isolation and amino acid sequence.</title>
        <authorList>
            <person name="Fisher W.K."/>
            <person name="Thompson E.O.P."/>
        </authorList>
    </citation>
    <scope>PROTEIN SEQUENCE OF 2-149</scope>
    <scope>ACETYLATION AT THR-2</scope>
</reference>
<organism>
    <name type="scientific">Heterodontus portusjacksoni</name>
    <name type="common">Port Jackson shark</name>
    <dbReference type="NCBI Taxonomy" id="7793"/>
    <lineage>
        <taxon>Eukaryota</taxon>
        <taxon>Metazoa</taxon>
        <taxon>Chordata</taxon>
        <taxon>Craniata</taxon>
        <taxon>Vertebrata</taxon>
        <taxon>Chondrichthyes</taxon>
        <taxon>Elasmobranchii</taxon>
        <taxon>Galeomorphii</taxon>
        <taxon>Heterodontoidea</taxon>
        <taxon>Heterodontiformes</taxon>
        <taxon>Heterodontidae</taxon>
        <taxon>Heterodontus</taxon>
    </lineage>
</organism>
<keyword id="KW-0007">Acetylation</keyword>
<keyword id="KW-0963">Cytoplasm</keyword>
<keyword id="KW-0903">Direct protein sequencing</keyword>
<keyword id="KW-0349">Heme</keyword>
<keyword id="KW-0408">Iron</keyword>
<keyword id="KW-0479">Metal-binding</keyword>
<keyword id="KW-0514">Muscle protein</keyword>
<keyword id="KW-0560">Oxidoreductase</keyword>
<keyword id="KW-0561">Oxygen transport</keyword>
<keyword id="KW-0813">Transport</keyword>
<protein>
    <recommendedName>
        <fullName>Myoglobin</fullName>
    </recommendedName>
    <alternativeName>
        <fullName evidence="1">Nitrite reductase MB</fullName>
        <ecNumber evidence="1">1.7.-.-</ecNumber>
    </alternativeName>
    <alternativeName>
        <fullName evidence="1">Pseudoperoxidase MB</fullName>
        <ecNumber evidence="1">1.11.1.-</ecNumber>
    </alternativeName>
</protein>
<feature type="initiator methionine" description="Removed" evidence="6">
    <location>
        <position position="1"/>
    </location>
</feature>
<feature type="chain" id="PRO_0000053301" description="Myoglobin">
    <location>
        <begin position="2"/>
        <end position="149"/>
    </location>
</feature>
<feature type="domain" description="Globin" evidence="5">
    <location>
        <begin position="2"/>
        <end position="143"/>
    </location>
</feature>
<feature type="binding site" evidence="4">
    <location>
        <position position="60"/>
    </location>
    <ligand>
        <name>nitrite</name>
        <dbReference type="ChEBI" id="CHEBI:16301"/>
    </ligand>
</feature>
<feature type="binding site" evidence="3 5">
    <location>
        <position position="60"/>
    </location>
    <ligand>
        <name>O2</name>
        <dbReference type="ChEBI" id="CHEBI:15379"/>
    </ligand>
</feature>
<feature type="binding site" description="proximal binding residue" evidence="1">
    <location>
        <position position="89"/>
    </location>
    <ligand>
        <name>heme b</name>
        <dbReference type="ChEBI" id="CHEBI:60344"/>
    </ligand>
    <ligandPart>
        <name>Fe</name>
        <dbReference type="ChEBI" id="CHEBI:18248"/>
    </ligandPart>
</feature>
<feature type="modified residue" description="N-acetylthreonine" evidence="6">
    <location>
        <position position="2"/>
    </location>
</feature>
<dbReference type="EC" id="1.7.-.-" evidence="1"/>
<dbReference type="EC" id="1.11.1.-" evidence="1"/>
<dbReference type="PIR" id="A02527">
    <property type="entry name" value="MYRKJ"/>
</dbReference>
<dbReference type="SMR" id="P02206"/>
<dbReference type="iPTMnet" id="P02206"/>
<dbReference type="GO" id="GO:0070062">
    <property type="term" value="C:extracellular exosome"/>
    <property type="evidence" value="ECO:0007669"/>
    <property type="project" value="TreeGrafter"/>
</dbReference>
<dbReference type="GO" id="GO:0016528">
    <property type="term" value="C:sarcoplasm"/>
    <property type="evidence" value="ECO:0000250"/>
    <property type="project" value="UniProtKB"/>
</dbReference>
<dbReference type="GO" id="GO:0020037">
    <property type="term" value="F:heme binding"/>
    <property type="evidence" value="ECO:0007669"/>
    <property type="project" value="InterPro"/>
</dbReference>
<dbReference type="GO" id="GO:0046872">
    <property type="term" value="F:metal ion binding"/>
    <property type="evidence" value="ECO:0007669"/>
    <property type="project" value="UniProtKB-KW"/>
</dbReference>
<dbReference type="GO" id="GO:0098809">
    <property type="term" value="F:nitrite reductase activity"/>
    <property type="evidence" value="ECO:0000250"/>
    <property type="project" value="UniProtKB"/>
</dbReference>
<dbReference type="GO" id="GO:0019825">
    <property type="term" value="F:oxygen binding"/>
    <property type="evidence" value="ECO:0007669"/>
    <property type="project" value="InterPro"/>
</dbReference>
<dbReference type="GO" id="GO:0005344">
    <property type="term" value="F:oxygen carrier activity"/>
    <property type="evidence" value="ECO:0000250"/>
    <property type="project" value="UniProtKB"/>
</dbReference>
<dbReference type="GO" id="GO:0004601">
    <property type="term" value="F:peroxidase activity"/>
    <property type="evidence" value="ECO:0000250"/>
    <property type="project" value="UniProtKB"/>
</dbReference>
<dbReference type="GO" id="GO:0019430">
    <property type="term" value="P:removal of superoxide radicals"/>
    <property type="evidence" value="ECO:0000250"/>
    <property type="project" value="UniProtKB"/>
</dbReference>
<dbReference type="CDD" id="cd08926">
    <property type="entry name" value="Mb"/>
    <property type="match status" value="1"/>
</dbReference>
<dbReference type="Gene3D" id="6.10.140.2100">
    <property type="match status" value="1"/>
</dbReference>
<dbReference type="Gene3D" id="6.10.140.2110">
    <property type="match status" value="1"/>
</dbReference>
<dbReference type="InterPro" id="IPR000971">
    <property type="entry name" value="Globin"/>
</dbReference>
<dbReference type="InterPro" id="IPR009050">
    <property type="entry name" value="Globin-like_sf"/>
</dbReference>
<dbReference type="InterPro" id="IPR002335">
    <property type="entry name" value="Myoglobin"/>
</dbReference>
<dbReference type="PANTHER" id="PTHR47132">
    <property type="entry name" value="MYOGLOBIN"/>
    <property type="match status" value="1"/>
</dbReference>
<dbReference type="PANTHER" id="PTHR47132:SF1">
    <property type="entry name" value="MYOGLOBIN"/>
    <property type="match status" value="1"/>
</dbReference>
<dbReference type="Pfam" id="PF00042">
    <property type="entry name" value="Globin"/>
    <property type="match status" value="1"/>
</dbReference>
<dbReference type="PRINTS" id="PR00613">
    <property type="entry name" value="MYOGLOBIN"/>
</dbReference>
<dbReference type="SUPFAM" id="SSF46458">
    <property type="entry name" value="Globin-like"/>
    <property type="match status" value="1"/>
</dbReference>
<dbReference type="PROSITE" id="PS01033">
    <property type="entry name" value="GLOBIN"/>
    <property type="match status" value="1"/>
</dbReference>